<accession>P30827</accession>
<accession>Q0G9L1</accession>
<evidence type="ECO:0000255" key="1">
    <source>
        <dbReference type="HAMAP-Rule" id="MF_01338"/>
    </source>
</evidence>
<gene>
    <name evidence="1" type="primary">rbcL</name>
</gene>
<geneLocation type="chloroplast"/>
<dbReference type="EC" id="4.1.1.39" evidence="1"/>
<dbReference type="EMBL" id="X54346">
    <property type="protein sequence ID" value="CAA38234.1"/>
    <property type="molecule type" value="Genomic_DNA"/>
</dbReference>
<dbReference type="EMBL" id="DQ899947">
    <property type="protein sequence ID" value="ABI32517.1"/>
    <property type="molecule type" value="Genomic_DNA"/>
</dbReference>
<dbReference type="RefSeq" id="YP_740210.1">
    <property type="nucleotide sequence ID" value="NC_008326.1"/>
</dbReference>
<dbReference type="SMR" id="P30827"/>
<dbReference type="GeneID" id="4266632"/>
<dbReference type="GO" id="GO:0009507">
    <property type="term" value="C:chloroplast"/>
    <property type="evidence" value="ECO:0007669"/>
    <property type="project" value="UniProtKB-SubCell"/>
</dbReference>
<dbReference type="GO" id="GO:0000287">
    <property type="term" value="F:magnesium ion binding"/>
    <property type="evidence" value="ECO:0007669"/>
    <property type="project" value="UniProtKB-UniRule"/>
</dbReference>
<dbReference type="GO" id="GO:0004497">
    <property type="term" value="F:monooxygenase activity"/>
    <property type="evidence" value="ECO:0007669"/>
    <property type="project" value="UniProtKB-KW"/>
</dbReference>
<dbReference type="GO" id="GO:0016984">
    <property type="term" value="F:ribulose-bisphosphate carboxylase activity"/>
    <property type="evidence" value="ECO:0007669"/>
    <property type="project" value="UniProtKB-UniRule"/>
</dbReference>
<dbReference type="GO" id="GO:0009853">
    <property type="term" value="P:photorespiration"/>
    <property type="evidence" value="ECO:0007669"/>
    <property type="project" value="UniProtKB-KW"/>
</dbReference>
<dbReference type="GO" id="GO:0019253">
    <property type="term" value="P:reductive pentose-phosphate cycle"/>
    <property type="evidence" value="ECO:0007669"/>
    <property type="project" value="UniProtKB-UniRule"/>
</dbReference>
<dbReference type="CDD" id="cd08212">
    <property type="entry name" value="RuBisCO_large_I"/>
    <property type="match status" value="1"/>
</dbReference>
<dbReference type="FunFam" id="3.20.20.110:FF:000001">
    <property type="entry name" value="Ribulose bisphosphate carboxylase large chain"/>
    <property type="match status" value="1"/>
</dbReference>
<dbReference type="FunFam" id="3.30.70.150:FF:000001">
    <property type="entry name" value="Ribulose bisphosphate carboxylase large chain"/>
    <property type="match status" value="1"/>
</dbReference>
<dbReference type="Gene3D" id="3.20.20.110">
    <property type="entry name" value="Ribulose bisphosphate carboxylase, large subunit, C-terminal domain"/>
    <property type="match status" value="1"/>
</dbReference>
<dbReference type="Gene3D" id="3.30.70.150">
    <property type="entry name" value="RuBisCO large subunit, N-terminal domain"/>
    <property type="match status" value="1"/>
</dbReference>
<dbReference type="HAMAP" id="MF_01338">
    <property type="entry name" value="RuBisCO_L_type1"/>
    <property type="match status" value="1"/>
</dbReference>
<dbReference type="InterPro" id="IPR033966">
    <property type="entry name" value="RuBisCO"/>
</dbReference>
<dbReference type="InterPro" id="IPR020878">
    <property type="entry name" value="RuBisCo_large_chain_AS"/>
</dbReference>
<dbReference type="InterPro" id="IPR000685">
    <property type="entry name" value="RuBisCO_lsu_C"/>
</dbReference>
<dbReference type="InterPro" id="IPR036376">
    <property type="entry name" value="RuBisCO_lsu_C_sf"/>
</dbReference>
<dbReference type="InterPro" id="IPR017443">
    <property type="entry name" value="RuBisCO_lsu_fd_N"/>
</dbReference>
<dbReference type="InterPro" id="IPR036422">
    <property type="entry name" value="RuBisCO_lsu_N_sf"/>
</dbReference>
<dbReference type="InterPro" id="IPR020888">
    <property type="entry name" value="RuBisCO_lsuI"/>
</dbReference>
<dbReference type="NCBIfam" id="NF003252">
    <property type="entry name" value="PRK04208.1"/>
    <property type="match status" value="1"/>
</dbReference>
<dbReference type="PANTHER" id="PTHR42704">
    <property type="entry name" value="RIBULOSE BISPHOSPHATE CARBOXYLASE"/>
    <property type="match status" value="1"/>
</dbReference>
<dbReference type="PANTHER" id="PTHR42704:SF15">
    <property type="entry name" value="RIBULOSE BISPHOSPHATE CARBOXYLASE LARGE CHAIN"/>
    <property type="match status" value="1"/>
</dbReference>
<dbReference type="Pfam" id="PF00016">
    <property type="entry name" value="RuBisCO_large"/>
    <property type="match status" value="1"/>
</dbReference>
<dbReference type="Pfam" id="PF02788">
    <property type="entry name" value="RuBisCO_large_N"/>
    <property type="match status" value="1"/>
</dbReference>
<dbReference type="SFLD" id="SFLDG01052">
    <property type="entry name" value="RuBisCO"/>
    <property type="match status" value="1"/>
</dbReference>
<dbReference type="SFLD" id="SFLDS00014">
    <property type="entry name" value="RuBisCO"/>
    <property type="match status" value="1"/>
</dbReference>
<dbReference type="SFLD" id="SFLDG00301">
    <property type="entry name" value="RuBisCO-like_proteins"/>
    <property type="match status" value="1"/>
</dbReference>
<dbReference type="SUPFAM" id="SSF51649">
    <property type="entry name" value="RuBisCo, C-terminal domain"/>
    <property type="match status" value="1"/>
</dbReference>
<dbReference type="SUPFAM" id="SSF54966">
    <property type="entry name" value="RuBisCO, large subunit, small (N-terminal) domain"/>
    <property type="match status" value="1"/>
</dbReference>
<dbReference type="PROSITE" id="PS00157">
    <property type="entry name" value="RUBISCO_LARGE"/>
    <property type="match status" value="1"/>
</dbReference>
<organism>
    <name type="scientific">Liriodendron tulipifera</name>
    <name type="common">Tuliptree</name>
    <name type="synonym">Tulip poplar</name>
    <dbReference type="NCBI Taxonomy" id="3415"/>
    <lineage>
        <taxon>Eukaryota</taxon>
        <taxon>Viridiplantae</taxon>
        <taxon>Streptophyta</taxon>
        <taxon>Embryophyta</taxon>
        <taxon>Tracheophyta</taxon>
        <taxon>Spermatophyta</taxon>
        <taxon>Magnoliopsida</taxon>
        <taxon>Magnoliidae</taxon>
        <taxon>Magnoliales</taxon>
        <taxon>Magnoliaceae</taxon>
        <taxon>Liriodendron</taxon>
    </lineage>
</organism>
<reference key="1">
    <citation type="journal article" date="1990" name="Nature">
        <title>Chloroplast DNA sequence from a miocene Magnolia species.</title>
        <authorList>
            <person name="Golenberg E.M."/>
            <person name="Giannasi D.E."/>
            <person name="Clegg M.T."/>
            <person name="Smiley C.J."/>
            <person name="Durbin M."/>
            <person name="Henderson D."/>
            <person name="Zurawski G."/>
        </authorList>
    </citation>
    <scope>NUCLEOTIDE SEQUENCE [GENOMIC DNA]</scope>
</reference>
<reference key="2">
    <citation type="journal article" date="2006" name="BMC Evol. Biol.">
        <title>Complete plastid genome sequences of Drimys, Liriodendron, and Piper: implications for the phylogenetic relationships of magnoliids.</title>
        <authorList>
            <person name="Cai Z."/>
            <person name="Penaflor C."/>
            <person name="Kuehl J.V."/>
            <person name="Leebens-Mack J."/>
            <person name="Carlson J.E."/>
            <person name="dePamphilis C.W."/>
            <person name="Boore J.L."/>
            <person name="Jansen R.K."/>
        </authorList>
    </citation>
    <scope>NUCLEOTIDE SEQUENCE [LARGE SCALE GENOMIC DNA]</scope>
</reference>
<name>RBL_LIRTU</name>
<feature type="propeptide" id="PRO_0000031281" evidence="1">
    <location>
        <begin position="1"/>
        <end position="2"/>
    </location>
</feature>
<feature type="chain" id="PRO_0000031282" description="Ribulose bisphosphate carboxylase large chain">
    <location>
        <begin position="3"/>
        <end position="476"/>
    </location>
</feature>
<feature type="active site" description="Proton acceptor" evidence="1">
    <location>
        <position position="175"/>
    </location>
</feature>
<feature type="active site" description="Proton acceptor" evidence="1">
    <location>
        <position position="294"/>
    </location>
</feature>
<feature type="binding site" description="in homodimeric partner" evidence="1">
    <location>
        <position position="123"/>
    </location>
    <ligand>
        <name>substrate</name>
    </ligand>
</feature>
<feature type="binding site" evidence="1">
    <location>
        <position position="173"/>
    </location>
    <ligand>
        <name>substrate</name>
    </ligand>
</feature>
<feature type="binding site" evidence="1">
    <location>
        <position position="177"/>
    </location>
    <ligand>
        <name>substrate</name>
    </ligand>
</feature>
<feature type="binding site" description="via carbamate group" evidence="1">
    <location>
        <position position="201"/>
    </location>
    <ligand>
        <name>Mg(2+)</name>
        <dbReference type="ChEBI" id="CHEBI:18420"/>
    </ligand>
</feature>
<feature type="binding site" evidence="1">
    <location>
        <position position="203"/>
    </location>
    <ligand>
        <name>Mg(2+)</name>
        <dbReference type="ChEBI" id="CHEBI:18420"/>
    </ligand>
</feature>
<feature type="binding site" evidence="1">
    <location>
        <position position="204"/>
    </location>
    <ligand>
        <name>Mg(2+)</name>
        <dbReference type="ChEBI" id="CHEBI:18420"/>
    </ligand>
</feature>
<feature type="binding site" evidence="1">
    <location>
        <position position="295"/>
    </location>
    <ligand>
        <name>substrate</name>
    </ligand>
</feature>
<feature type="binding site" evidence="1">
    <location>
        <position position="327"/>
    </location>
    <ligand>
        <name>substrate</name>
    </ligand>
</feature>
<feature type="binding site" evidence="1">
    <location>
        <position position="379"/>
    </location>
    <ligand>
        <name>substrate</name>
    </ligand>
</feature>
<feature type="site" description="Transition state stabilizer" evidence="1">
    <location>
        <position position="334"/>
    </location>
</feature>
<feature type="modified residue" description="N-acetylproline" evidence="1">
    <location>
        <position position="3"/>
    </location>
</feature>
<feature type="modified residue" description="N6,N6,N6-trimethyllysine" evidence="1">
    <location>
        <position position="14"/>
    </location>
</feature>
<feature type="modified residue" description="N6-carboxylysine" evidence="1">
    <location>
        <position position="201"/>
    </location>
</feature>
<feature type="disulfide bond" description="Interchain; in linked form" evidence="1">
    <location>
        <position position="247"/>
    </location>
</feature>
<sequence length="476" mass="52765">MSPQTETKASVGFKAGVKEYKLTYYTPEYETKDTDILAAFRVTPQLGVPPEEAGAAVAAESSTGTWTTVWTDGLTSLDRYKGRCYHIEPVAGETDQYIVYVAYPLDLFEEGSVTNMFTSIVGNVFGFKALRALRLEDLRIPPAYIKTFQGPPHGIQVERDKLNKYGRPLLGCTIKPKLGLSAKNYGRAVYECLRGGLDFTKDDENVNSQPFMRWRDRFLFCAEALYKAQSETGEIKGHYLNATAGTCEEMMKRAVFARELGVPIVMHDYLTGGFTANTSLAHYCRDNGLLLHIHRAMHAVIDRQKNHGIHFRVLAKALRMSGGDHIHSGTVVGKLEGERDITLGFVDLLRDDFIEKDRSRGIYFSQDWVSLPGVLPVASGGIHVWHMPALTEIFGDDSVLQFGGGTLGHPWGNAPGAVANRVALEACVQARNEGRDLASQGNEIIREASKWSPELAAACEVWKEIKFDSFKAMDTL</sequence>
<comment type="function">
    <text evidence="1">RuBisCO catalyzes two reactions: the carboxylation of D-ribulose 1,5-bisphosphate, the primary event in carbon dioxide fixation, as well as the oxidative fragmentation of the pentose substrate in the photorespiration process. Both reactions occur simultaneously and in competition at the same active site.</text>
</comment>
<comment type="catalytic activity">
    <reaction evidence="1">
        <text>2 (2R)-3-phosphoglycerate + 2 H(+) = D-ribulose 1,5-bisphosphate + CO2 + H2O</text>
        <dbReference type="Rhea" id="RHEA:23124"/>
        <dbReference type="ChEBI" id="CHEBI:15377"/>
        <dbReference type="ChEBI" id="CHEBI:15378"/>
        <dbReference type="ChEBI" id="CHEBI:16526"/>
        <dbReference type="ChEBI" id="CHEBI:57870"/>
        <dbReference type="ChEBI" id="CHEBI:58272"/>
        <dbReference type="EC" id="4.1.1.39"/>
    </reaction>
</comment>
<comment type="catalytic activity">
    <reaction evidence="1">
        <text>D-ribulose 1,5-bisphosphate + O2 = 2-phosphoglycolate + (2R)-3-phosphoglycerate + 2 H(+)</text>
        <dbReference type="Rhea" id="RHEA:36631"/>
        <dbReference type="ChEBI" id="CHEBI:15378"/>
        <dbReference type="ChEBI" id="CHEBI:15379"/>
        <dbReference type="ChEBI" id="CHEBI:57870"/>
        <dbReference type="ChEBI" id="CHEBI:58033"/>
        <dbReference type="ChEBI" id="CHEBI:58272"/>
    </reaction>
</comment>
<comment type="cofactor">
    <cofactor evidence="1">
        <name>Mg(2+)</name>
        <dbReference type="ChEBI" id="CHEBI:18420"/>
    </cofactor>
    <text evidence="1">Binds 1 Mg(2+) ion per subunit.</text>
</comment>
<comment type="subunit">
    <text evidence="1">Heterohexadecamer of 8 large chains and 8 small chains; disulfide-linked. The disulfide link is formed within the large subunit homodimers.</text>
</comment>
<comment type="subcellular location">
    <subcellularLocation>
        <location>Plastid</location>
        <location>Chloroplast</location>
    </subcellularLocation>
</comment>
<comment type="PTM">
    <text evidence="1">The disulfide bond which can form in the large chain dimeric partners within the hexadecamer appears to be associated with oxidative stress and protein turnover.</text>
</comment>
<comment type="miscellaneous">
    <text evidence="1">The basic functional RuBisCO is composed of a large chain homodimer in a 'head-to-tail' conformation. In form I RuBisCO this homodimer is arranged in a barrel-like tetramer with the small subunits forming a tetrameric 'cap' on each end of the 'barrel'.</text>
</comment>
<comment type="similarity">
    <text evidence="1">Belongs to the RuBisCO large chain family. Type I subfamily.</text>
</comment>
<protein>
    <recommendedName>
        <fullName evidence="1">Ribulose bisphosphate carboxylase large chain</fullName>
        <shortName evidence="1">RuBisCO large subunit</shortName>
        <ecNumber evidence="1">4.1.1.39</ecNumber>
    </recommendedName>
</protein>
<proteinExistence type="inferred from homology"/>
<keyword id="KW-0007">Acetylation</keyword>
<keyword id="KW-0113">Calvin cycle</keyword>
<keyword id="KW-0120">Carbon dioxide fixation</keyword>
<keyword id="KW-0150">Chloroplast</keyword>
<keyword id="KW-1015">Disulfide bond</keyword>
<keyword id="KW-0456">Lyase</keyword>
<keyword id="KW-0460">Magnesium</keyword>
<keyword id="KW-0479">Metal-binding</keyword>
<keyword id="KW-0488">Methylation</keyword>
<keyword id="KW-0503">Monooxygenase</keyword>
<keyword id="KW-0560">Oxidoreductase</keyword>
<keyword id="KW-0601">Photorespiration</keyword>
<keyword id="KW-0602">Photosynthesis</keyword>
<keyword id="KW-0934">Plastid</keyword>